<feature type="chain" id="PRO_0000154824" description="Integral membrane protein 2B">
    <location>
        <begin position="1"/>
        <end position="266"/>
    </location>
</feature>
<feature type="chain" id="PRO_0000417487" description="BRI2, membrane form" evidence="1">
    <location>
        <begin position="1"/>
        <end position="243"/>
    </location>
</feature>
<feature type="chain" id="PRO_0000417488" description="BRI2 intracellular domain" evidence="1">
    <location>
        <begin position="1"/>
        <end status="unknown"/>
    </location>
</feature>
<feature type="chain" id="PRO_0000417489" description="BRI2C, soluble form" evidence="1">
    <location>
        <begin status="unknown"/>
        <end position="243"/>
    </location>
</feature>
<feature type="peptide" id="PRO_0000417490" description="Bri23 peptide" evidence="1">
    <location>
        <begin position="244"/>
        <end position="266"/>
    </location>
</feature>
<feature type="topological domain" description="Cytoplasmic" evidence="4">
    <location>
        <begin position="1"/>
        <end position="54"/>
    </location>
</feature>
<feature type="transmembrane region" description="Helical; Signal-anchor for type II membrane protein" evidence="4">
    <location>
        <begin position="55"/>
        <end position="75"/>
    </location>
</feature>
<feature type="topological domain" description="Lumenal" evidence="4">
    <location>
        <begin position="76"/>
        <end position="266"/>
    </location>
</feature>
<feature type="domain" description="BRICHOS" evidence="5">
    <location>
        <begin position="137"/>
        <end position="231"/>
    </location>
</feature>
<feature type="region of interest" description="Necessary for interaction with APP and inhibitor effects on APP processing" evidence="1">
    <location>
        <begin position="102"/>
        <end position="134"/>
    </location>
</feature>
<feature type="site" description="Cleavage; by furin" evidence="1">
    <location>
        <begin position="243"/>
        <end position="244"/>
    </location>
</feature>
<feature type="glycosylation site" description="N-linked (GlcNAc...) asparagine" evidence="4">
    <location>
        <position position="170"/>
    </location>
</feature>
<feature type="disulfide bond" description="Interchain" evidence="1">
    <location>
        <position position="89"/>
    </location>
</feature>
<feature type="disulfide bond" evidence="1">
    <location>
        <begin position="164"/>
        <end position="223"/>
    </location>
</feature>
<feature type="disulfide bond" evidence="1">
    <location>
        <begin position="248"/>
        <end position="265"/>
    </location>
</feature>
<sequence>MVKVTFNSALAQKEAKKDEPKSSEEALIAPPDAVAVDCKDPDDVVPVGQRRAWCWCMCFGLAFMLAGVILGGAYLYKYFALQPDDVYYCGLKYIKDDVILSEPSADAPAARYQTIEENIKIFEEDAVEFISVPVPEFADSDPANIVHDFNKKLTAYLDLNLDKCYVIPLNTSIVMPPRNLLELLINIKAGTYLPQSYLIHEHMVITDRIENVDHLGFFIYRLCHDKETYKLQRRETIRGIQKREASNCFTIRHFENKFAVETLICS</sequence>
<protein>
    <recommendedName>
        <fullName>Integral membrane protein 2B</fullName>
    </recommendedName>
    <alternativeName>
        <fullName>Immature BRI2</fullName>
        <shortName>imBRI2</shortName>
    </alternativeName>
    <alternativeName>
        <fullName>Transmembrane protein BRI</fullName>
        <shortName>Bri</shortName>
    </alternativeName>
    <component>
        <recommendedName>
            <fullName>BRI2, membrane form</fullName>
        </recommendedName>
        <alternativeName>
            <fullName>Mature BRI2</fullName>
            <shortName>mBRI2</shortName>
        </alternativeName>
    </component>
    <component>
        <recommendedName>
            <fullName>BRI2 intracellular domain</fullName>
            <shortName>BRI2 ICD</shortName>
        </recommendedName>
    </component>
    <component>
        <recommendedName>
            <fullName>BRI2C, soluble form</fullName>
        </recommendedName>
    </component>
    <component>
        <recommendedName>
            <fullName>Bri23 peptide</fullName>
            <shortName>Bri2-23</shortName>
        </recommendedName>
        <alternativeName>
            <fullName>ABri23</fullName>
        </alternativeName>
        <alternativeName>
            <fullName>C-terminal peptide</fullName>
        </alternativeName>
        <alternativeName>
            <fullName>P23 peptide</fullName>
        </alternativeName>
    </component>
</protein>
<name>ITM2B_RAT</name>
<accession>Q5XIE8</accession>
<keyword id="KW-1003">Cell membrane</keyword>
<keyword id="KW-1015">Disulfide bond</keyword>
<keyword id="KW-0967">Endosome</keyword>
<keyword id="KW-0325">Glycoprotein</keyword>
<keyword id="KW-0333">Golgi apparatus</keyword>
<keyword id="KW-0472">Membrane</keyword>
<keyword id="KW-1185">Reference proteome</keyword>
<keyword id="KW-0964">Secreted</keyword>
<keyword id="KW-0735">Signal-anchor</keyword>
<keyword id="KW-0812">Transmembrane</keyword>
<keyword id="KW-1133">Transmembrane helix</keyword>
<organism>
    <name type="scientific">Rattus norvegicus</name>
    <name type="common">Rat</name>
    <dbReference type="NCBI Taxonomy" id="10116"/>
    <lineage>
        <taxon>Eukaryota</taxon>
        <taxon>Metazoa</taxon>
        <taxon>Chordata</taxon>
        <taxon>Craniata</taxon>
        <taxon>Vertebrata</taxon>
        <taxon>Euteleostomi</taxon>
        <taxon>Mammalia</taxon>
        <taxon>Eutheria</taxon>
        <taxon>Euarchontoglires</taxon>
        <taxon>Glires</taxon>
        <taxon>Rodentia</taxon>
        <taxon>Myomorpha</taxon>
        <taxon>Muroidea</taxon>
        <taxon>Muridae</taxon>
        <taxon>Murinae</taxon>
        <taxon>Rattus</taxon>
    </lineage>
</organism>
<dbReference type="EMBL" id="BC083735">
    <property type="protein sequence ID" value="AAH83735.1"/>
    <property type="molecule type" value="mRNA"/>
</dbReference>
<dbReference type="RefSeq" id="NP_001006964.1">
    <property type="nucleotide sequence ID" value="NM_001006963.1"/>
</dbReference>
<dbReference type="SMR" id="Q5XIE8"/>
<dbReference type="BioGRID" id="253181">
    <property type="interactions" value="512"/>
</dbReference>
<dbReference type="FunCoup" id="Q5XIE8">
    <property type="interactions" value="2444"/>
</dbReference>
<dbReference type="IntAct" id="Q5XIE8">
    <property type="interactions" value="512"/>
</dbReference>
<dbReference type="MINT" id="Q5XIE8"/>
<dbReference type="STRING" id="10116.ENSRNOP00000023037"/>
<dbReference type="GlyCosmos" id="Q5XIE8">
    <property type="glycosylation" value="1 site, No reported glycans"/>
</dbReference>
<dbReference type="GlyGen" id="Q5XIE8">
    <property type="glycosylation" value="1 site"/>
</dbReference>
<dbReference type="iPTMnet" id="Q5XIE8"/>
<dbReference type="PhosphoSitePlus" id="Q5XIE8"/>
<dbReference type="SwissPalm" id="Q5XIE8"/>
<dbReference type="PaxDb" id="10116-ENSRNOP00000023037"/>
<dbReference type="Ensembl" id="ENSRNOT00000023037.6">
    <property type="protein sequence ID" value="ENSRNOP00000023037.3"/>
    <property type="gene ID" value="ENSRNOG00000016271.6"/>
</dbReference>
<dbReference type="GeneID" id="290364"/>
<dbReference type="KEGG" id="rno:290364"/>
<dbReference type="UCSC" id="RGD:620727">
    <property type="organism name" value="rat"/>
</dbReference>
<dbReference type="AGR" id="RGD:620727"/>
<dbReference type="CTD" id="9445"/>
<dbReference type="RGD" id="620727">
    <property type="gene designation" value="Itm2b"/>
</dbReference>
<dbReference type="eggNOG" id="KOG4681">
    <property type="taxonomic scope" value="Eukaryota"/>
</dbReference>
<dbReference type="GeneTree" id="ENSGT00950000183115"/>
<dbReference type="HOGENOM" id="CLU_074596_0_0_1"/>
<dbReference type="InParanoid" id="Q5XIE8"/>
<dbReference type="OMA" id="YFAFQQD"/>
<dbReference type="OrthoDB" id="44560at9989"/>
<dbReference type="PhylomeDB" id="Q5XIE8"/>
<dbReference type="TreeFam" id="TF317770"/>
<dbReference type="PRO" id="PR:Q5XIE8"/>
<dbReference type="Proteomes" id="UP000002494">
    <property type="component" value="Chromosome 15"/>
</dbReference>
<dbReference type="Bgee" id="ENSRNOG00000016271">
    <property type="expression patterns" value="Expressed in Ammon's horn and 20 other cell types or tissues"/>
</dbReference>
<dbReference type="GO" id="GO:0010008">
    <property type="term" value="C:endosome membrane"/>
    <property type="evidence" value="ECO:0007669"/>
    <property type="project" value="UniProtKB-SubCell"/>
</dbReference>
<dbReference type="GO" id="GO:0005615">
    <property type="term" value="C:extracellular space"/>
    <property type="evidence" value="ECO:0000250"/>
    <property type="project" value="UniProtKB"/>
</dbReference>
<dbReference type="GO" id="GO:0005794">
    <property type="term" value="C:Golgi apparatus"/>
    <property type="evidence" value="ECO:0000318"/>
    <property type="project" value="GO_Central"/>
</dbReference>
<dbReference type="GO" id="GO:0000139">
    <property type="term" value="C:Golgi membrane"/>
    <property type="evidence" value="ECO:0007669"/>
    <property type="project" value="UniProtKB-SubCell"/>
</dbReference>
<dbReference type="GO" id="GO:0030660">
    <property type="term" value="C:Golgi-associated vesicle membrane"/>
    <property type="evidence" value="ECO:0000250"/>
    <property type="project" value="UniProtKB"/>
</dbReference>
<dbReference type="GO" id="GO:0031090">
    <property type="term" value="C:organelle membrane"/>
    <property type="evidence" value="ECO:0000250"/>
    <property type="project" value="UniProtKB"/>
</dbReference>
<dbReference type="GO" id="GO:0005886">
    <property type="term" value="C:plasma membrane"/>
    <property type="evidence" value="ECO:0000250"/>
    <property type="project" value="UniProtKB"/>
</dbReference>
<dbReference type="GO" id="GO:0001540">
    <property type="term" value="F:amyloid-beta binding"/>
    <property type="evidence" value="ECO:0000266"/>
    <property type="project" value="RGD"/>
</dbReference>
<dbReference type="GO" id="GO:0005524">
    <property type="term" value="F:ATP binding"/>
    <property type="evidence" value="ECO:0000266"/>
    <property type="project" value="RGD"/>
</dbReference>
<dbReference type="GO" id="GO:0042985">
    <property type="term" value="P:negative regulation of amyloid precursor protein biosynthetic process"/>
    <property type="evidence" value="ECO:0000250"/>
    <property type="project" value="UniProtKB"/>
</dbReference>
<dbReference type="InterPro" id="IPR007084">
    <property type="entry name" value="BRICHOS_dom"/>
</dbReference>
<dbReference type="InterPro" id="IPR040145">
    <property type="entry name" value="ITM2"/>
</dbReference>
<dbReference type="PANTHER" id="PTHR10962:SF4">
    <property type="entry name" value="INTEGRAL MEMBRANE PROTEIN 2B"/>
    <property type="match status" value="1"/>
</dbReference>
<dbReference type="PANTHER" id="PTHR10962">
    <property type="entry name" value="INTEGRAL TRANSMEMBRANE PROTEIN 2"/>
    <property type="match status" value="1"/>
</dbReference>
<dbReference type="Pfam" id="PF04089">
    <property type="entry name" value="BRICHOS"/>
    <property type="match status" value="1"/>
</dbReference>
<dbReference type="SMART" id="SM01039">
    <property type="entry name" value="BRICHOS"/>
    <property type="match status" value="1"/>
</dbReference>
<dbReference type="PROSITE" id="PS50869">
    <property type="entry name" value="BRICHOS"/>
    <property type="match status" value="1"/>
</dbReference>
<gene>
    <name type="primary">Itm2b</name>
</gene>
<evidence type="ECO:0000250" key="1"/>
<evidence type="ECO:0000250" key="2">
    <source>
        <dbReference type="UniProtKB" id="O89051"/>
    </source>
</evidence>
<evidence type="ECO:0000250" key="3">
    <source>
        <dbReference type="UniProtKB" id="Q9Y287"/>
    </source>
</evidence>
<evidence type="ECO:0000255" key="4"/>
<evidence type="ECO:0000255" key="5">
    <source>
        <dbReference type="PROSITE-ProRule" id="PRU00255"/>
    </source>
</evidence>
<evidence type="ECO:0000305" key="6"/>
<reference key="1">
    <citation type="journal article" date="2004" name="Genome Res.">
        <title>The status, quality, and expansion of the NIH full-length cDNA project: the Mammalian Gene Collection (MGC).</title>
        <authorList>
            <consortium name="The MGC Project Team"/>
        </authorList>
    </citation>
    <scope>NUCLEOTIDE SEQUENCE [LARGE SCALE MRNA]</scope>
    <source>
        <tissue>Heart</tissue>
    </source>
</reference>
<proteinExistence type="evidence at protein level"/>
<comment type="function">
    <text evidence="1">Plays a regulatory role in the processing of the amyloid-beta A4 precursor protein (APP) and acts as an inhibitor of the amyloid-beta peptide aggregation and fibrils deposition. Plays a role in the induction of neurite outgrowth. Functions as a protease inhibitor by blocking access of secretases to APP cleavage sites (By similarity).</text>
</comment>
<comment type="function">
    <text evidence="1">Mature BRI2 (mBRI2) functions as a modulator of the amyloid-beta A4 precursor protein (APP) processing leading to a strong reduction in the secretion of secretase-processed amyloid-beta protein 40 and amyloid-beta protein 42.</text>
</comment>
<comment type="function">
    <text evidence="1">Bri23 peptide prevents aggregation of APP amyloid-beta protein 42 into toxic oligomers.</text>
</comment>
<comment type="subunit">
    <text evidence="1 2">Homodimer; disulfide-linked. Interacts with SPPL2A and SPPL2B. Interacts with APP. Mature BRI2 (mBRI2) interacts with the APP amyloid-beta A4 protein; the interaction occurs at the cell surface and in the endocytic compartments and enable alpha- and beta-secretase-induced APP cleavage inhibition. Mature BRI2 (mBRI2) interacts with the APP C99; the interaction occurs in the endocytic compartments and enable gamma-secretase-induced C99 cleavage inhibition. May form heterodimers with Bri23 peptide and APP amyloid-beta protein 40 (By similarity). Interacts with ADAM7 in sperm; the interaction increases following capacitation (By similarity).</text>
</comment>
<comment type="interaction">
    <interactant intactId="EBI-15348306">
        <id>Q5XIE8</id>
    </interactant>
    <interactant intactId="EBI-375655">
        <id>P31016</id>
        <label>Dlg4</label>
    </interactant>
    <organismsDiffer>false</organismsDiffer>
    <experiments>5</experiments>
</comment>
<comment type="interaction">
    <interactant intactId="EBI-15348306">
        <id>Q5XIE8</id>
    </interactant>
    <interactant intactId="EBI-26438795">
        <id>P07936</id>
        <label>Gap43</label>
    </interactant>
    <organismsDiffer>false</organismsDiffer>
    <experiments>3</experiments>
</comment>
<comment type="interaction">
    <interactant intactId="EBI-15348306">
        <id>Q5XIE8</id>
    </interactant>
    <interactant intactId="EBI-976085">
        <id>P07825</id>
        <label>Syp</label>
    </interactant>
    <organismsDiffer>false</organismsDiffer>
    <experiments>4</experiments>
</comment>
<comment type="subcellular location">
    <molecule>Integral membrane protein 2B</molecule>
    <subcellularLocation>
        <location evidence="3">Golgi apparatus membrane</location>
        <topology evidence="3">Single-pass type II membrane protein</topology>
    </subcellularLocation>
    <text evidence="3">Immature BRI2 (imBRI2) is cleaved by furin in the Golgi into mBRI2 and a Bri23 peptide. mBRI2 is transported to the plasma membrane and Bri23 peptide is secreted.</text>
</comment>
<comment type="subcellular location">
    <molecule>BRI2, membrane form</molecule>
    <subcellularLocation>
        <location evidence="3">Cell membrane</location>
        <topology evidence="3">Single-pass type II membrane protein</topology>
    </subcellularLocation>
    <subcellularLocation>
        <location evidence="3">Endosome membrane</location>
        <topology evidence="3">Single-pass type II membrane protein</topology>
    </subcellularLocation>
    <text evidence="3">Mature BRI2 (mBRI2) needs to be transported from the endoplasmic reticulum compartment to the cell membrane in order to be able to inhibit APP processing.</text>
</comment>
<comment type="subcellular location">
    <molecule>Bri23 peptide</molecule>
    <subcellularLocation>
        <location evidence="3">Secreted</location>
    </subcellularLocation>
    <text evidence="3">Detected in the cerebral spinal fluid (CSF).</text>
</comment>
<comment type="subcellular location">
    <molecule>BRI2C, soluble form</molecule>
    <subcellularLocation>
        <location evidence="3">Secreted</location>
    </subcellularLocation>
</comment>
<comment type="PTM">
    <text evidence="1">The ectodomain C-terminal part of the imBRI2 is processed by furin producing a secreted Bri23 peptide and a mature BRI2, membrane form (mBRI2). The remaining part of the ectodomain of mBRI2 containing the BRICHOS domain is cleaved by ADAM10 and is secreted (BRI2C, soluble form). The membrane-bound N-terminal fragment (BRI2C, membrane form) is further proteolytically processed by SPPL2A and SPPL2B through regulated intramembrane proteolysis producing a secreted C-peptide and a BRI2 intracellular domain (BRI2 ICD) released in the cytosol. Shedding by ADAM10 facilitates intramembrane cleavage but is not absolutely required for BRI2 ICD generation (By similarity).</text>
</comment>
<comment type="PTM">
    <text evidence="1">Glycosylation at Asn-170 is important for cell surface localization, but doesn't affect furin- and ADAM10-induced proteolytic processing.</text>
</comment>
<comment type="similarity">
    <text evidence="6">Belongs to the ITM2 family.</text>
</comment>